<feature type="chain" id="PRO_0000445246" description="Major facilitator superfamily multidrug transporter NAG4">
    <location>
        <begin position="1"/>
        <end position="581"/>
    </location>
</feature>
<feature type="transmembrane region" description="Helical" evidence="1">
    <location>
        <begin position="132"/>
        <end position="152"/>
    </location>
</feature>
<feature type="transmembrane region" description="Helical" evidence="1">
    <location>
        <begin position="169"/>
        <end position="189"/>
    </location>
</feature>
<feature type="transmembrane region" description="Helical" evidence="1">
    <location>
        <begin position="199"/>
        <end position="219"/>
    </location>
</feature>
<feature type="transmembrane region" description="Helical" evidence="1">
    <location>
        <begin position="230"/>
        <end position="250"/>
    </location>
</feature>
<feature type="transmembrane region" description="Helical" evidence="1">
    <location>
        <begin position="261"/>
        <end position="281"/>
    </location>
</feature>
<feature type="transmembrane region" description="Helical" evidence="1">
    <location>
        <begin position="290"/>
        <end position="310"/>
    </location>
</feature>
<feature type="transmembrane region" description="Helical" evidence="1">
    <location>
        <begin position="365"/>
        <end position="385"/>
    </location>
</feature>
<feature type="transmembrane region" description="Helical" evidence="1">
    <location>
        <begin position="403"/>
        <end position="423"/>
    </location>
</feature>
<feature type="transmembrane region" description="Helical" evidence="1">
    <location>
        <begin position="447"/>
        <end position="467"/>
    </location>
</feature>
<feature type="transmembrane region" description="Helical" evidence="1">
    <location>
        <begin position="471"/>
        <end position="491"/>
    </location>
</feature>
<feature type="transmembrane region" description="Helical" evidence="1">
    <location>
        <begin position="510"/>
        <end position="530"/>
    </location>
</feature>
<feature type="transmembrane region" description="Helical" evidence="1">
    <location>
        <begin position="544"/>
        <end position="564"/>
    </location>
</feature>
<feature type="region of interest" description="Disordered" evidence="3">
    <location>
        <begin position="1"/>
        <end position="43"/>
    </location>
</feature>
<feature type="compositionally biased region" description="Polar residues" evidence="3">
    <location>
        <begin position="1"/>
        <end position="14"/>
    </location>
</feature>
<feature type="compositionally biased region" description="Basic and acidic residues" evidence="3">
    <location>
        <begin position="15"/>
        <end position="27"/>
    </location>
</feature>
<feature type="glycosylation site" description="N-linked (GlcNAc...) asparagine" evidence="2">
    <location>
        <position position="11"/>
    </location>
</feature>
<feature type="glycosylation site" description="N-linked (GlcNAc...) asparagine" evidence="2">
    <location>
        <position position="125"/>
    </location>
</feature>
<dbReference type="EMBL" id="CP017628">
    <property type="protein sequence ID" value="AOW30378.1"/>
    <property type="molecule type" value="Genomic_DNA"/>
</dbReference>
<dbReference type="RefSeq" id="XP_712435.1">
    <property type="nucleotide sequence ID" value="XM_707342.2"/>
</dbReference>
<dbReference type="STRING" id="237561.Q59RG0"/>
<dbReference type="GlyCosmos" id="Q59RG0">
    <property type="glycosylation" value="2 sites, No reported glycans"/>
</dbReference>
<dbReference type="EnsemblFungi" id="C6_04620C_A-T">
    <property type="protein sequence ID" value="C6_04620C_A-T-p1"/>
    <property type="gene ID" value="C6_04620C_A"/>
</dbReference>
<dbReference type="GeneID" id="3645978"/>
<dbReference type="KEGG" id="cal:CAALFM_C604620CA"/>
<dbReference type="CGD" id="CAL0000197244">
    <property type="gene designation" value="NAG4"/>
</dbReference>
<dbReference type="VEuPathDB" id="FungiDB:C6_04620C_A"/>
<dbReference type="eggNOG" id="KOG0255">
    <property type="taxonomic scope" value="Eukaryota"/>
</dbReference>
<dbReference type="HOGENOM" id="CLU_008455_11_5_1"/>
<dbReference type="InParanoid" id="Q59RG0"/>
<dbReference type="OMA" id="TIYMAIC"/>
<dbReference type="OrthoDB" id="6770063at2759"/>
<dbReference type="PHI-base" id="PHI:511"/>
<dbReference type="Proteomes" id="UP000000559">
    <property type="component" value="Chromosome 6"/>
</dbReference>
<dbReference type="GO" id="GO:0005886">
    <property type="term" value="C:plasma membrane"/>
    <property type="evidence" value="ECO:0000318"/>
    <property type="project" value="GO_Central"/>
</dbReference>
<dbReference type="GO" id="GO:0022857">
    <property type="term" value="F:transmembrane transporter activity"/>
    <property type="evidence" value="ECO:0000318"/>
    <property type="project" value="GO_Central"/>
</dbReference>
<dbReference type="GO" id="GO:0008645">
    <property type="term" value="P:hexose transmembrane transport"/>
    <property type="evidence" value="ECO:0000315"/>
    <property type="project" value="CGD"/>
</dbReference>
<dbReference type="GO" id="GO:0055085">
    <property type="term" value="P:transmembrane transport"/>
    <property type="evidence" value="ECO:0000318"/>
    <property type="project" value="GO_Central"/>
</dbReference>
<dbReference type="CDD" id="cd17323">
    <property type="entry name" value="MFS_Tpo1_MDR_like"/>
    <property type="match status" value="1"/>
</dbReference>
<dbReference type="FunFam" id="1.20.1250.20:FF:000011">
    <property type="entry name" value="MFS multidrug transporter, putative"/>
    <property type="match status" value="1"/>
</dbReference>
<dbReference type="Gene3D" id="1.20.1250.20">
    <property type="entry name" value="MFS general substrate transporter like domains"/>
    <property type="match status" value="1"/>
</dbReference>
<dbReference type="InterPro" id="IPR011701">
    <property type="entry name" value="MFS"/>
</dbReference>
<dbReference type="InterPro" id="IPR020846">
    <property type="entry name" value="MFS_dom"/>
</dbReference>
<dbReference type="InterPro" id="IPR036259">
    <property type="entry name" value="MFS_trans_sf"/>
</dbReference>
<dbReference type="PANTHER" id="PTHR23502">
    <property type="entry name" value="MAJOR FACILITATOR SUPERFAMILY"/>
    <property type="match status" value="1"/>
</dbReference>
<dbReference type="PANTHER" id="PTHR23502:SF48">
    <property type="entry name" value="MULTIDRUG TRANSPORTER, PUTATIVE (AFU_ORTHOLOGUE AFUA_5G02700)-RELATED"/>
    <property type="match status" value="1"/>
</dbReference>
<dbReference type="Pfam" id="PF07690">
    <property type="entry name" value="MFS_1"/>
    <property type="match status" value="1"/>
</dbReference>
<dbReference type="SUPFAM" id="SSF103473">
    <property type="entry name" value="MFS general substrate transporter"/>
    <property type="match status" value="1"/>
</dbReference>
<dbReference type="PROSITE" id="PS50850">
    <property type="entry name" value="MFS"/>
    <property type="match status" value="1"/>
</dbReference>
<accession>Q59RG0</accession>
<evidence type="ECO:0000255" key="1"/>
<evidence type="ECO:0000255" key="2">
    <source>
        <dbReference type="PROSITE-ProRule" id="PRU00498"/>
    </source>
</evidence>
<evidence type="ECO:0000256" key="3">
    <source>
        <dbReference type="SAM" id="MobiDB-lite"/>
    </source>
</evidence>
<evidence type="ECO:0000269" key="4">
    <source>
    </source>
</evidence>
<evidence type="ECO:0000269" key="5">
    <source>
    </source>
</evidence>
<evidence type="ECO:0000269" key="6">
    <source>
    </source>
</evidence>
<evidence type="ECO:0000269" key="7">
    <source>
    </source>
</evidence>
<evidence type="ECO:0000303" key="8">
    <source>
    </source>
</evidence>
<evidence type="ECO:0000303" key="9">
    <source>
    </source>
</evidence>
<evidence type="ECO:0000305" key="10"/>
<sequence length="581" mass="64592">MSHATDSTLDNASVDSEKVRDFGDDLQNHPVQPTRSILSKIRSRDDDARSLVSNNKGVERIISDLQEGAGQLGPLEQPYDIKKIETHPDPHTDYNEADPWKYPIDSESGLRLVEWVDGDKHNPKNISKAKKWLYTLVLGAVCFVVALGSAIVTGDMERPAEYFGVSEEVIILASVTVFVIGFGVGPLVFAPMSEEVGRKPIYVVTLFIAVVFIVPCGAAKNIATLIVCRLIDGIAFSAPMTLIGGSLADIWEGPERGTAMAIFSAAPFLGPVCGPIFGGLLCDHAPTWRWIYWTFLIVAGVFYAIFIAIVPETHHGILLKKRAKKLRKETGDSRYRSFNELQIRSFGEVAKTSLLRPFVLLSELIVFLMTIYMAICYGLLYMFFFAYPVVYQQGKGWSASLTGVMFIPIGVGVIIATIAAPFFNKDYNRRAQVYRDRGELPPPELRLIPMMIACWFVPVGLFAFAWSSYTWVSWAGPCFSGLAAGFGFCCLYNPANNYIVDSYQHYAASALAAKTFVRSIWGACVPLFTIQMYHRLGDQWATSLMAFISLACCAIPYLFFFFGARVRTFSRYAYTPETNTK</sequence>
<reference key="1">
    <citation type="journal article" date="2004" name="Proc. Natl. Acad. Sci. U.S.A.">
        <title>The diploid genome sequence of Candida albicans.</title>
        <authorList>
            <person name="Jones T."/>
            <person name="Federspiel N.A."/>
            <person name="Chibana H."/>
            <person name="Dungan J."/>
            <person name="Kalman S."/>
            <person name="Magee B.B."/>
            <person name="Newport G."/>
            <person name="Thorstenson Y.R."/>
            <person name="Agabian N."/>
            <person name="Magee P.T."/>
            <person name="Davis R.W."/>
            <person name="Scherer S."/>
        </authorList>
    </citation>
    <scope>NUCLEOTIDE SEQUENCE [LARGE SCALE GENOMIC DNA]</scope>
    <source>
        <strain>SC5314 / ATCC MYA-2876</strain>
    </source>
</reference>
<reference key="2">
    <citation type="journal article" date="2007" name="Genome Biol.">
        <title>Assembly of the Candida albicans genome into sixteen supercontigs aligned on the eight chromosomes.</title>
        <authorList>
            <person name="van het Hoog M."/>
            <person name="Rast T.J."/>
            <person name="Martchenko M."/>
            <person name="Grindle S."/>
            <person name="Dignard D."/>
            <person name="Hogues H."/>
            <person name="Cuomo C."/>
            <person name="Berriman M."/>
            <person name="Scherer S."/>
            <person name="Magee B.B."/>
            <person name="Whiteway M."/>
            <person name="Chibana H."/>
            <person name="Nantel A."/>
            <person name="Magee P.T."/>
        </authorList>
    </citation>
    <scope>GENOME REANNOTATION</scope>
    <source>
        <strain>SC5314 / ATCC MYA-2876</strain>
    </source>
</reference>
<reference key="3">
    <citation type="journal article" date="2013" name="Genome Biol.">
        <title>Assembly of a phased diploid Candida albicans genome facilitates allele-specific measurements and provides a simple model for repeat and indel structure.</title>
        <authorList>
            <person name="Muzzey D."/>
            <person name="Schwartz K."/>
            <person name="Weissman J.S."/>
            <person name="Sherlock G."/>
        </authorList>
    </citation>
    <scope>NUCLEOTIDE SEQUENCE [LARGE SCALE GENOMIC DNA]</scope>
    <scope>GENOME REANNOTATION</scope>
    <source>
        <strain>SC5314 / ATCC MYA-2876</strain>
    </source>
</reference>
<reference key="4">
    <citation type="journal article" date="2001" name="Eur. J. Biochem.">
        <title>Identification and characterization of the genes for N-acetylglucosamine kinase and N-acetylglucosamine-phosphate deacetylase in the pathogenic fungus Candida albicans.</title>
        <authorList>
            <person name="Yamada-Okabe T."/>
            <person name="Sakamori Y."/>
            <person name="Mio T."/>
            <person name="Yamada-Okabe H."/>
        </authorList>
    </citation>
    <scope>IDENTIFICATION</scope>
</reference>
<reference key="5">
    <citation type="journal article" date="2002" name="FEMS Microbiol. Lett.">
        <title>Characterization of the CaNAG3, CaNAG4, and CaNAG6 genes of the pathogenic fungus Candida albicans: possible involvement of these genes in the susceptibilities of cytotoxic agents.</title>
        <authorList>
            <person name="Yamada-Okabe T."/>
            <person name="Yamada-Okabe H."/>
        </authorList>
    </citation>
    <scope>FUNCTION</scope>
    <scope>DISRUPTION PHENOTYPE</scope>
</reference>
<reference key="6">
    <citation type="journal article" date="2003" name="Biochem. Biophys. Res. Commun.">
        <title>Two membrane proteins located in the Nag regulon of Candida albicans confer multidrug resistance.</title>
        <authorList>
            <person name="Sengupta M."/>
            <person name="Datta A."/>
        </authorList>
    </citation>
    <scope>FUNCTION</scope>
    <scope>INDUCTION</scope>
    <scope>DISRUPTION PHENOTYPE</scope>
</reference>
<reference key="7">
    <citation type="journal article" date="2009" name="Appl. Environ. Microbiol.">
        <title>N-acetylglucosamine utilization by Saccharomyces cerevisiae based on expression of Candida albicans NAG genes.</title>
        <authorList>
            <person name="Wendland J."/>
            <person name="Schaub Y."/>
            <person name="Walther A."/>
        </authorList>
    </citation>
    <scope>FUNCTION</scope>
</reference>
<reference key="8">
    <citation type="journal article" date="2015" name="Mol. Microbiol.">
        <title>An expanded regulatory network temporally controls Candida albicans biofilm formation.</title>
        <authorList>
            <person name="Fox E.P."/>
            <person name="Bui C.K."/>
            <person name="Nett J.E."/>
            <person name="Hartooni N."/>
            <person name="Mui M.C."/>
            <person name="Andes D.R."/>
            <person name="Nobile C.J."/>
            <person name="Johnson A.D."/>
        </authorList>
    </citation>
    <scope>INDUCTION</scope>
</reference>
<proteinExistence type="evidence at transcript level"/>
<keyword id="KW-1003">Cell membrane</keyword>
<keyword id="KW-0325">Glycoprotein</keyword>
<keyword id="KW-0472">Membrane</keyword>
<keyword id="KW-1185">Reference proteome</keyword>
<keyword id="KW-0812">Transmembrane</keyword>
<keyword id="KW-1133">Transmembrane helix</keyword>
<keyword id="KW-0813">Transport</keyword>
<keyword id="KW-0843">Virulence</keyword>
<comment type="function">
    <text evidence="4 5 6">MFS transporter involved in N-acetylglucosamine (GlcNAc) uptake (PubMed:19648376). Confers resistance to cycloheximide, 4-nitroquinoline-N-oxide, and 1,10-phenanthroline, and contributes to virulence (PubMed:12076781, PubMed:12589826).</text>
</comment>
<comment type="subcellular location">
    <subcellularLocation>
        <location evidence="10">Cell membrane</location>
        <topology evidence="1">Multi-pass membrane protein</topology>
    </subcellularLocation>
</comment>
<comment type="induction">
    <text evidence="5 7">Expression is induced in presence of cycloheximide and 4-nitroquinoline-N-oxide (PubMed:12589826). Expression is up-regulated during biofilm formation (PubMed:25784162).</text>
</comment>
<comment type="disruption phenotype">
    <text evidence="4">Leads to increased susceptibility to cycloheximide, 4-nitroquinoline-N-oxide, and 1,10-phenanthroline, but not to actinomycin D, fluconazole, ketoconazole and colchicine (PubMed:12076781). Also leads to attenuated virulence in mice (PubMed:12076781).</text>
</comment>
<comment type="similarity">
    <text evidence="10">Belongs to the major facilitator superfamily. DHA1 family. Polyamines/proton antiporter (TC 2.A.1.2.16) subfamily.</text>
</comment>
<organism>
    <name type="scientific">Candida albicans (strain SC5314 / ATCC MYA-2876)</name>
    <name type="common">Yeast</name>
    <dbReference type="NCBI Taxonomy" id="237561"/>
    <lineage>
        <taxon>Eukaryota</taxon>
        <taxon>Fungi</taxon>
        <taxon>Dikarya</taxon>
        <taxon>Ascomycota</taxon>
        <taxon>Saccharomycotina</taxon>
        <taxon>Pichiomycetes</taxon>
        <taxon>Debaryomycetaceae</taxon>
        <taxon>Candida/Lodderomyces clade</taxon>
        <taxon>Candida</taxon>
    </lineage>
</organism>
<protein>
    <recommendedName>
        <fullName evidence="8">Major facilitator superfamily multidrug transporter NAG4</fullName>
    </recommendedName>
    <alternativeName>
        <fullName evidence="8">N-acetylglucosamine utilization protein 4</fullName>
    </alternativeName>
    <alternativeName>
        <fullName evidence="9">Transmembrane protein 2</fullName>
    </alternativeName>
</protein>
<name>NAG4_CANAL</name>
<gene>
    <name evidence="8" type="primary">NAG4</name>
    <name type="synonym">GAN4</name>
    <name type="synonym">IFY1</name>
    <name evidence="9" type="synonym">TMP2</name>
    <name type="ordered locus">CAALFM_C604620CA</name>
    <name type="ORF">Aorf19.2160</name>
</gene>